<gene>
    <name type="primary">KHT2</name>
</gene>
<organism>
    <name type="scientific">Kluyveromyces lactis</name>
    <name type="common">Yeast</name>
    <name type="synonym">Candida sphaerica</name>
    <dbReference type="NCBI Taxonomy" id="28985"/>
    <lineage>
        <taxon>Eukaryota</taxon>
        <taxon>Fungi</taxon>
        <taxon>Dikarya</taxon>
        <taxon>Ascomycota</taxon>
        <taxon>Saccharomycotina</taxon>
        <taxon>Saccharomycetes</taxon>
        <taxon>Saccharomycetales</taxon>
        <taxon>Saccharomycetaceae</taxon>
        <taxon>Kluyveromyces</taxon>
    </lineage>
</organism>
<feature type="chain" id="PRO_0000050420" description="Hexose transporter 2">
    <location>
        <begin position="1"/>
        <end position="566"/>
    </location>
</feature>
<feature type="topological domain" description="Cytoplasmic" evidence="1">
    <location>
        <begin position="22"/>
        <end position="61"/>
    </location>
</feature>
<feature type="transmembrane region" description="Helical; Name=1" evidence="1">
    <location>
        <begin position="62"/>
        <end position="82"/>
    </location>
</feature>
<feature type="topological domain" description="Extracellular" evidence="1">
    <location>
        <begin position="83"/>
        <end position="112"/>
    </location>
</feature>
<feature type="transmembrane region" description="Helical; Name=2" evidence="1">
    <location>
        <begin position="113"/>
        <end position="133"/>
    </location>
</feature>
<feature type="topological domain" description="Cytoplasmic" evidence="1">
    <location>
        <begin position="134"/>
        <end position="140"/>
    </location>
</feature>
<feature type="transmembrane region" description="Helical; Name=3" evidence="1">
    <location>
        <begin position="141"/>
        <end position="161"/>
    </location>
</feature>
<feature type="topological domain" description="Extracellular" evidence="1">
    <location>
        <begin position="162"/>
        <end position="166"/>
    </location>
</feature>
<feature type="transmembrane region" description="Helical; Name=4" evidence="1">
    <location>
        <begin position="167"/>
        <end position="187"/>
    </location>
</feature>
<feature type="topological domain" description="Cytoplasmic" evidence="1">
    <location>
        <begin position="188"/>
        <end position="198"/>
    </location>
</feature>
<feature type="transmembrane region" description="Helical; Name=5" evidence="1">
    <location>
        <begin position="199"/>
        <end position="219"/>
    </location>
</feature>
<feature type="topological domain" description="Extracellular" evidence="1">
    <location>
        <begin position="220"/>
        <end position="233"/>
    </location>
</feature>
<feature type="transmembrane region" description="Helical; Name=6" evidence="1">
    <location>
        <begin position="234"/>
        <end position="254"/>
    </location>
</feature>
<feature type="topological domain" description="Cytoplasmic" evidence="1">
    <location>
        <begin position="255"/>
        <end position="333"/>
    </location>
</feature>
<feature type="transmembrane region" description="Helical; Name=7" evidence="1">
    <location>
        <begin position="334"/>
        <end position="353"/>
    </location>
</feature>
<feature type="topological domain" description="Extracellular" evidence="1">
    <location>
        <begin position="354"/>
        <end position="357"/>
    </location>
</feature>
<feature type="transmembrane region" description="Helical; Name=8" evidence="1">
    <location>
        <begin position="358"/>
        <end position="378"/>
    </location>
</feature>
<feature type="topological domain" description="Cytoplasmic" evidence="1">
    <location>
        <begin position="379"/>
        <end position="385"/>
    </location>
</feature>
<feature type="transmembrane region" description="Helical; Name=9" evidence="1">
    <location>
        <begin position="386"/>
        <end position="406"/>
    </location>
</feature>
<feature type="topological domain" description="Extracellular" evidence="1">
    <location>
        <begin position="407"/>
        <end position="428"/>
    </location>
</feature>
<feature type="transmembrane region" description="Helical; Name=10" evidence="1">
    <location>
        <begin position="429"/>
        <end position="449"/>
    </location>
</feature>
<feature type="topological domain" description="Cytoplasmic" evidence="1">
    <location>
        <begin position="450"/>
        <end position="465"/>
    </location>
</feature>
<feature type="transmembrane region" description="Helical; Name=11" evidence="1">
    <location>
        <begin position="466"/>
        <end position="486"/>
    </location>
</feature>
<feature type="topological domain" description="Extracellular" evidence="1">
    <location>
        <begin position="487"/>
        <end position="492"/>
    </location>
</feature>
<feature type="transmembrane region" description="Helical; Name=12" evidence="1">
    <location>
        <begin position="493"/>
        <end position="513"/>
    </location>
</feature>
<feature type="topological domain" description="Cytoplasmic" evidence="1">
    <location>
        <begin position="514"/>
        <end position="566"/>
    </location>
</feature>
<feature type="region of interest" description="Disordered" evidence="2">
    <location>
        <begin position="1"/>
        <end position="39"/>
    </location>
</feature>
<feature type="compositionally biased region" description="Polar residues" evidence="2">
    <location>
        <begin position="16"/>
        <end position="32"/>
    </location>
</feature>
<feature type="glycosylation site" description="N-linked (GlcNAc...) asparagine" evidence="1">
    <location>
        <position position="88"/>
    </location>
</feature>
<name>KHT2_KLULC</name>
<protein>
    <recommendedName>
        <fullName>Hexose transporter 2</fullName>
    </recommendedName>
</protein>
<accession>P53387</accession>
<dbReference type="EMBL" id="Z47080">
    <property type="protein sequence ID" value="CAA87389.1"/>
    <property type="molecule type" value="Genomic_DNA"/>
</dbReference>
<dbReference type="PIR" id="S51081">
    <property type="entry name" value="S51081"/>
</dbReference>
<dbReference type="SMR" id="P53387"/>
<dbReference type="GlyCosmos" id="P53387">
    <property type="glycosylation" value="1 site, No reported glycans"/>
</dbReference>
<dbReference type="VEuPathDB" id="FungiDB:KLLA0_D13310g"/>
<dbReference type="GO" id="GO:0005886">
    <property type="term" value="C:plasma membrane"/>
    <property type="evidence" value="ECO:0007669"/>
    <property type="project" value="TreeGrafter"/>
</dbReference>
<dbReference type="GO" id="GO:0005351">
    <property type="term" value="F:carbohydrate:proton symporter activity"/>
    <property type="evidence" value="ECO:0007669"/>
    <property type="project" value="TreeGrafter"/>
</dbReference>
<dbReference type="GO" id="GO:0055056">
    <property type="term" value="F:D-glucose transmembrane transporter activity"/>
    <property type="evidence" value="ECO:0007669"/>
    <property type="project" value="UniProtKB-ARBA"/>
</dbReference>
<dbReference type="CDD" id="cd17356">
    <property type="entry name" value="MFS_HXT"/>
    <property type="match status" value="1"/>
</dbReference>
<dbReference type="FunFam" id="1.20.1250.20:FF:000044">
    <property type="entry name" value="Hexose transporter Hxt3p"/>
    <property type="match status" value="1"/>
</dbReference>
<dbReference type="Gene3D" id="1.20.1250.20">
    <property type="entry name" value="MFS general substrate transporter like domains"/>
    <property type="match status" value="1"/>
</dbReference>
<dbReference type="InterPro" id="IPR020846">
    <property type="entry name" value="MFS_dom"/>
</dbReference>
<dbReference type="InterPro" id="IPR005828">
    <property type="entry name" value="MFS_sugar_transport-like"/>
</dbReference>
<dbReference type="InterPro" id="IPR050360">
    <property type="entry name" value="MFS_Sugar_Transporters"/>
</dbReference>
<dbReference type="InterPro" id="IPR036259">
    <property type="entry name" value="MFS_trans_sf"/>
</dbReference>
<dbReference type="InterPro" id="IPR003663">
    <property type="entry name" value="Sugar/inositol_transpt"/>
</dbReference>
<dbReference type="InterPro" id="IPR005829">
    <property type="entry name" value="Sugar_transporter_CS"/>
</dbReference>
<dbReference type="NCBIfam" id="TIGR00879">
    <property type="entry name" value="SP"/>
    <property type="match status" value="1"/>
</dbReference>
<dbReference type="PANTHER" id="PTHR48022:SF75">
    <property type="entry name" value="GALACTOSE TRANSPORTER-RELATED"/>
    <property type="match status" value="1"/>
</dbReference>
<dbReference type="PANTHER" id="PTHR48022">
    <property type="entry name" value="PLASTIDIC GLUCOSE TRANSPORTER 4"/>
    <property type="match status" value="1"/>
</dbReference>
<dbReference type="Pfam" id="PF00083">
    <property type="entry name" value="Sugar_tr"/>
    <property type="match status" value="1"/>
</dbReference>
<dbReference type="PRINTS" id="PR00171">
    <property type="entry name" value="SUGRTRNSPORT"/>
</dbReference>
<dbReference type="SUPFAM" id="SSF103473">
    <property type="entry name" value="MFS general substrate transporter"/>
    <property type="match status" value="1"/>
</dbReference>
<dbReference type="PROSITE" id="PS50850">
    <property type="entry name" value="MFS"/>
    <property type="match status" value="1"/>
</dbReference>
<dbReference type="PROSITE" id="PS00216">
    <property type="entry name" value="SUGAR_TRANSPORT_1"/>
    <property type="match status" value="1"/>
</dbReference>
<dbReference type="PROSITE" id="PS00217">
    <property type="entry name" value="SUGAR_TRANSPORT_2"/>
    <property type="match status" value="1"/>
</dbReference>
<proteinExistence type="inferred from homology"/>
<evidence type="ECO:0000255" key="1"/>
<evidence type="ECO:0000256" key="2">
    <source>
        <dbReference type="SAM" id="MobiDB-lite"/>
    </source>
</evidence>
<evidence type="ECO:0000305" key="3"/>
<reference key="1">
    <citation type="journal article" date="1997" name="Eur. J. Biochem.">
        <title>Influence of mutations in hexose-transporter genes on glucose repression in Kluyveromyces lactis.</title>
        <authorList>
            <person name="Weirich J."/>
            <person name="Goffrini P."/>
            <person name="Kuger P."/>
            <person name="Ferrero I."/>
            <person name="Breunig K.D."/>
        </authorList>
    </citation>
    <scope>NUCLEOTIDE SEQUENCE [GENOMIC DNA]</scope>
    <source>
        <strain>ATCC 96263 / JA6</strain>
    </source>
</reference>
<comment type="function">
    <text>Probable glucose transporter.</text>
</comment>
<comment type="subcellular location">
    <subcellularLocation>
        <location>Membrane</location>
        <topology>Multi-pass membrane protein</topology>
    </subcellularLocation>
</comment>
<comment type="similarity">
    <text evidence="3">Belongs to the major facilitator superfamily. Sugar transporter (TC 2.A.1.1) family.</text>
</comment>
<sequence>MSELETGTAAHGTPVENKSVSSSQASTPTNVGSRDDLKVDDDNHSVDAIELPKKPRSAYITVSILCLMVAFGGFVFGWDTGTISGFVNQTDFIRRFGQEKADGSHYLSNVRTGLIVSIFNIGCAIGGIILSKLGDMYGRRIGLMIVVLIYVVGIIIQIASIDKWYQYFIGRIISGLGVGGISVLSPMLISETAPKHIRGTLVSFYQLMITFGIFLGYCTNYGTKTYSNSVQWRVPLGLCFAWAIFMITGMLFVPESPRFLVEKDRIDEAKRSIAKSNKVSYEDPAVQAEVDLICAGVEAERLAGSASIKELFSTKTKVFQRLIMGMLIQSFQQLTGNNYFFYYGTTIFNSVGMDDSFETSIVLGIVNFASTFVAIYVVDKFGRRKCLLWGAAAMTACMVVFASVGVTRLWPDGANHPETASKGAGNCMIVFACFYIFCFATSWAPIAYVVVAESYPLRVKAKCMAIATASNWIWGFLNGFFTPFITSAIHFYYGYVFMGCLVAMFFYVFFFVPETKGLTLEEVQEMWEEGVLPWKSSSWVPSSRRNAGYDVDALQHDEKPWYKAML</sequence>
<keyword id="KW-0325">Glycoprotein</keyword>
<keyword id="KW-0472">Membrane</keyword>
<keyword id="KW-0677">Repeat</keyword>
<keyword id="KW-0762">Sugar transport</keyword>
<keyword id="KW-0812">Transmembrane</keyword>
<keyword id="KW-1133">Transmembrane helix</keyword>
<keyword id="KW-0813">Transport</keyword>